<sequence>MRYQNMFETLKKHEKMAFIPFVTLGDPNYEWSFEIIKTLIISGVSALELGFAFSDPVADGITIQVSHLRALKHASMAKNFQLLRAVRDYNPHIPIGLLAYANLIFSYGVDGFYAQIKECGVDSVLIADMPLIEKELVIKSAQKHQIKQIFIASPNASSKDLEQVATHSQGYIYTLARSGVTGASRILENDASAIIKTLKAFSPTPALLGFGISQKEHITNAKGMGADGVICGSALVKIIEENLNDENAMLEKIKGFIGGMIF</sequence>
<organism>
    <name type="scientific">Helicobacter pylori (strain G27)</name>
    <dbReference type="NCBI Taxonomy" id="563041"/>
    <lineage>
        <taxon>Bacteria</taxon>
        <taxon>Pseudomonadati</taxon>
        <taxon>Campylobacterota</taxon>
        <taxon>Epsilonproteobacteria</taxon>
        <taxon>Campylobacterales</taxon>
        <taxon>Helicobacteraceae</taxon>
        <taxon>Helicobacter</taxon>
    </lineage>
</organism>
<protein>
    <recommendedName>
        <fullName evidence="1">Tryptophan synthase alpha chain</fullName>
        <ecNumber evidence="1">4.2.1.20</ecNumber>
    </recommendedName>
</protein>
<proteinExistence type="inferred from homology"/>
<keyword id="KW-0028">Amino-acid biosynthesis</keyword>
<keyword id="KW-0057">Aromatic amino acid biosynthesis</keyword>
<keyword id="KW-0456">Lyase</keyword>
<keyword id="KW-1185">Reference proteome</keyword>
<keyword id="KW-0822">Tryptophan biosynthesis</keyword>
<name>TRPA_HELPG</name>
<reference key="1">
    <citation type="journal article" date="2009" name="J. Bacteriol.">
        <title>The complete genome sequence of Helicobacter pylori strain G27.</title>
        <authorList>
            <person name="Baltrus D.A."/>
            <person name="Amieva M.R."/>
            <person name="Covacci A."/>
            <person name="Lowe T.M."/>
            <person name="Merrell D.S."/>
            <person name="Ottemann K.M."/>
            <person name="Stein M."/>
            <person name="Salama N.R."/>
            <person name="Guillemin K."/>
        </authorList>
    </citation>
    <scope>NUCLEOTIDE SEQUENCE [LARGE SCALE GENOMIC DNA]</scope>
    <source>
        <strain>G27</strain>
    </source>
</reference>
<feature type="chain" id="PRO_1000095721" description="Tryptophan synthase alpha chain">
    <location>
        <begin position="1"/>
        <end position="262"/>
    </location>
</feature>
<feature type="active site" description="Proton acceptor" evidence="1">
    <location>
        <position position="48"/>
    </location>
</feature>
<feature type="active site" description="Proton acceptor" evidence="1">
    <location>
        <position position="59"/>
    </location>
</feature>
<accession>B5Z8S2</accession>
<gene>
    <name evidence="1" type="primary">trpA</name>
    <name type="ordered locus">HPG27_1223</name>
</gene>
<comment type="function">
    <text evidence="1">The alpha subunit is responsible for the aldol cleavage of indoleglycerol phosphate to indole and glyceraldehyde 3-phosphate.</text>
</comment>
<comment type="catalytic activity">
    <reaction evidence="1">
        <text>(1S,2R)-1-C-(indol-3-yl)glycerol 3-phosphate + L-serine = D-glyceraldehyde 3-phosphate + L-tryptophan + H2O</text>
        <dbReference type="Rhea" id="RHEA:10532"/>
        <dbReference type="ChEBI" id="CHEBI:15377"/>
        <dbReference type="ChEBI" id="CHEBI:33384"/>
        <dbReference type="ChEBI" id="CHEBI:57912"/>
        <dbReference type="ChEBI" id="CHEBI:58866"/>
        <dbReference type="ChEBI" id="CHEBI:59776"/>
        <dbReference type="EC" id="4.2.1.20"/>
    </reaction>
</comment>
<comment type="pathway">
    <text evidence="1">Amino-acid biosynthesis; L-tryptophan biosynthesis; L-tryptophan from chorismate: step 5/5.</text>
</comment>
<comment type="subunit">
    <text evidence="1">Tetramer of two alpha and two beta chains.</text>
</comment>
<comment type="similarity">
    <text evidence="1">Belongs to the TrpA family.</text>
</comment>
<dbReference type="EC" id="4.2.1.20" evidence="1"/>
<dbReference type="EMBL" id="CP001173">
    <property type="protein sequence ID" value="ACI27971.1"/>
    <property type="molecule type" value="Genomic_DNA"/>
</dbReference>
<dbReference type="RefSeq" id="WP_001270345.1">
    <property type="nucleotide sequence ID" value="NC_011333.1"/>
</dbReference>
<dbReference type="SMR" id="B5Z8S2"/>
<dbReference type="KEGG" id="hpg:HPG27_1223"/>
<dbReference type="HOGENOM" id="CLU_016734_0_4_7"/>
<dbReference type="UniPathway" id="UPA00035">
    <property type="reaction ID" value="UER00044"/>
</dbReference>
<dbReference type="Proteomes" id="UP000001735">
    <property type="component" value="Chromosome"/>
</dbReference>
<dbReference type="GO" id="GO:0005829">
    <property type="term" value="C:cytosol"/>
    <property type="evidence" value="ECO:0007669"/>
    <property type="project" value="TreeGrafter"/>
</dbReference>
<dbReference type="GO" id="GO:0004834">
    <property type="term" value="F:tryptophan synthase activity"/>
    <property type="evidence" value="ECO:0007669"/>
    <property type="project" value="UniProtKB-UniRule"/>
</dbReference>
<dbReference type="CDD" id="cd04724">
    <property type="entry name" value="Tryptophan_synthase_alpha"/>
    <property type="match status" value="1"/>
</dbReference>
<dbReference type="FunFam" id="3.20.20.70:FF:000037">
    <property type="entry name" value="Tryptophan synthase alpha chain"/>
    <property type="match status" value="1"/>
</dbReference>
<dbReference type="Gene3D" id="3.20.20.70">
    <property type="entry name" value="Aldolase class I"/>
    <property type="match status" value="1"/>
</dbReference>
<dbReference type="HAMAP" id="MF_00131">
    <property type="entry name" value="Trp_synth_alpha"/>
    <property type="match status" value="1"/>
</dbReference>
<dbReference type="InterPro" id="IPR013785">
    <property type="entry name" value="Aldolase_TIM"/>
</dbReference>
<dbReference type="InterPro" id="IPR011060">
    <property type="entry name" value="RibuloseP-bd_barrel"/>
</dbReference>
<dbReference type="InterPro" id="IPR018204">
    <property type="entry name" value="Trp_synthase_alpha_AS"/>
</dbReference>
<dbReference type="InterPro" id="IPR002028">
    <property type="entry name" value="Trp_synthase_suA"/>
</dbReference>
<dbReference type="NCBIfam" id="TIGR00262">
    <property type="entry name" value="trpA"/>
    <property type="match status" value="1"/>
</dbReference>
<dbReference type="PANTHER" id="PTHR43406:SF1">
    <property type="entry name" value="TRYPTOPHAN SYNTHASE ALPHA CHAIN, CHLOROPLASTIC"/>
    <property type="match status" value="1"/>
</dbReference>
<dbReference type="PANTHER" id="PTHR43406">
    <property type="entry name" value="TRYPTOPHAN SYNTHASE, ALPHA CHAIN"/>
    <property type="match status" value="1"/>
</dbReference>
<dbReference type="Pfam" id="PF00290">
    <property type="entry name" value="Trp_syntA"/>
    <property type="match status" value="1"/>
</dbReference>
<dbReference type="SUPFAM" id="SSF51366">
    <property type="entry name" value="Ribulose-phoshate binding barrel"/>
    <property type="match status" value="1"/>
</dbReference>
<dbReference type="PROSITE" id="PS00167">
    <property type="entry name" value="TRP_SYNTHASE_ALPHA"/>
    <property type="match status" value="1"/>
</dbReference>
<evidence type="ECO:0000255" key="1">
    <source>
        <dbReference type="HAMAP-Rule" id="MF_00131"/>
    </source>
</evidence>